<keyword id="KW-0342">GTP-binding</keyword>
<keyword id="KW-0378">Hydrolase</keyword>
<keyword id="KW-0479">Metal-binding</keyword>
<keyword id="KW-0547">Nucleotide-binding</keyword>
<keyword id="KW-0686">Riboflavin biosynthesis</keyword>
<keyword id="KW-0862">Zinc</keyword>
<gene>
    <name type="primary">ribA</name>
</gene>
<accession>P43525</accession>
<sequence>MYADAPSDSAPPEAVLPMDEAAMRAVDRATAALRRGEAVAIETADGSVGAAVSVESVAIDAVQRLVQLTGAAPVLAVTRRRATVLKLMGEGTGVVALSLPRCLTADEAHALADPEHRPDGDMPDGLTATAMDPGSRETAAVDLARLARLLPAAIVAPATDHTGSAAEWAAEHDLLLVRARDIADYRVHVVRTLRRVAEARVPLSGAENTSIAAFRPIDGGPEHLAIIVGNPVAGEPVLARLHSECFTGDLLAGLRCDCGQQLRGAIAEIARHGSGVLLYLAQEGRGIGLVNKLRAYRIQDRGFDTVDANEILGFEADERVYLPAAEMLRQLGFTAVRLMTNNPEKLRQLARCGIEVVERVPHIFPANGHNEGYLRTKAERSGHMF</sequence>
<name>RIBA_AZOBR</name>
<feature type="chain" id="PRO_0000151784" description="GTP cyclohydrolase-2">
    <location>
        <begin position="1"/>
        <end position="385"/>
    </location>
</feature>
<feature type="region of interest" description="DHBP synthase-like">
    <location>
        <begin position="1"/>
        <end position="189"/>
    </location>
</feature>
<feature type="region of interest" description="GTP cyclohydrolase II">
    <location>
        <begin position="190"/>
        <end position="385"/>
    </location>
</feature>
<feature type="active site" description="Proton acceptor" evidence="2">
    <location>
        <position position="317"/>
    </location>
</feature>
<feature type="active site" description="Nucleophile" evidence="1">
    <location>
        <position position="319"/>
    </location>
</feature>
<feature type="binding site" evidence="1">
    <location>
        <begin position="240"/>
        <end position="244"/>
    </location>
    <ligand>
        <name>GTP</name>
        <dbReference type="ChEBI" id="CHEBI:37565"/>
    </ligand>
</feature>
<feature type="binding site" evidence="1">
    <location>
        <position position="245"/>
    </location>
    <ligand>
        <name>Zn(2+)</name>
        <dbReference type="ChEBI" id="CHEBI:29105"/>
        <note>catalytic</note>
    </ligand>
</feature>
<feature type="binding site" evidence="1">
    <location>
        <position position="256"/>
    </location>
    <ligand>
        <name>Zn(2+)</name>
        <dbReference type="ChEBI" id="CHEBI:29105"/>
        <note>catalytic</note>
    </ligand>
</feature>
<feature type="binding site" evidence="1">
    <location>
        <position position="258"/>
    </location>
    <ligand>
        <name>Zn(2+)</name>
        <dbReference type="ChEBI" id="CHEBI:29105"/>
        <note>catalytic</note>
    </ligand>
</feature>
<feature type="binding site" evidence="1">
    <location>
        <position position="261"/>
    </location>
    <ligand>
        <name>GTP</name>
        <dbReference type="ChEBI" id="CHEBI:37565"/>
    </ligand>
</feature>
<feature type="binding site" evidence="1">
    <location>
        <begin position="283"/>
        <end position="285"/>
    </location>
    <ligand>
        <name>GTP</name>
        <dbReference type="ChEBI" id="CHEBI:37565"/>
    </ligand>
</feature>
<feature type="binding site" evidence="1">
    <location>
        <position position="305"/>
    </location>
    <ligand>
        <name>GTP</name>
        <dbReference type="ChEBI" id="CHEBI:37565"/>
    </ligand>
</feature>
<feature type="binding site" evidence="1">
    <location>
        <position position="340"/>
    </location>
    <ligand>
        <name>GTP</name>
        <dbReference type="ChEBI" id="CHEBI:37565"/>
    </ligand>
</feature>
<feature type="binding site" evidence="1">
    <location>
        <position position="345"/>
    </location>
    <ligand>
        <name>GTP</name>
        <dbReference type="ChEBI" id="CHEBI:37565"/>
    </ligand>
</feature>
<proteinExistence type="inferred from homology"/>
<reference key="1">
    <citation type="journal article" date="1995" name="Gene">
        <title>Cloning and sequencing of the putative Azospirillum brasilense gene encoding GTP cyclohydrolase II.</title>
        <authorList>
            <person name="van Bastelaere E."/>
            <person name="Keijers V."/>
            <person name="Vanderleyden J."/>
        </authorList>
    </citation>
    <scope>NUCLEOTIDE SEQUENCE [GENOMIC DNA]</scope>
    <source>
        <strain>ATCC 29145 / DSM 1690 / IMET 11303 / Sp7</strain>
    </source>
</reference>
<comment type="function">
    <text evidence="1">Catalyzes the conversion of GTP to 2,5-diamino-6-ribosylamino-4(3H)-pyrimidinone 5'-phosphate (DARP), formate and pyrophosphate.</text>
</comment>
<comment type="catalytic activity">
    <reaction>
        <text>GTP + 4 H2O = 2,5-diamino-6-hydroxy-4-(5-phosphoribosylamino)-pyrimidine + formate + 2 phosphate + 3 H(+)</text>
        <dbReference type="Rhea" id="RHEA:23704"/>
        <dbReference type="ChEBI" id="CHEBI:15377"/>
        <dbReference type="ChEBI" id="CHEBI:15378"/>
        <dbReference type="ChEBI" id="CHEBI:15740"/>
        <dbReference type="ChEBI" id="CHEBI:37565"/>
        <dbReference type="ChEBI" id="CHEBI:43474"/>
        <dbReference type="ChEBI" id="CHEBI:58614"/>
        <dbReference type="EC" id="3.5.4.25"/>
    </reaction>
</comment>
<comment type="cofactor">
    <cofactor evidence="1">
        <name>Zn(2+)</name>
        <dbReference type="ChEBI" id="CHEBI:29105"/>
    </cofactor>
    <text evidence="1">Binds 1 zinc ion per subunit.</text>
</comment>
<comment type="pathway">
    <text>Cofactor biosynthesis; riboflavin biosynthesis; 5-amino-6-(D-ribitylamino)uracil from GTP: step 1/4.</text>
</comment>
<comment type="similarity">
    <text evidence="3">In the N-terminal section; belongs to the DHBP synthase family.</text>
</comment>
<comment type="similarity">
    <text evidence="3">In the C-terminal section; belongs to the GTP cyclohydrolase II family.</text>
</comment>
<protein>
    <recommendedName>
        <fullName>GTP cyclohydrolase-2</fullName>
        <ecNumber>3.5.4.25</ecNumber>
    </recommendedName>
    <alternativeName>
        <fullName>GTP cyclohydrolase II</fullName>
    </alternativeName>
</protein>
<evidence type="ECO:0000250" key="1"/>
<evidence type="ECO:0000255" key="2"/>
<evidence type="ECO:0000305" key="3"/>
<dbReference type="EC" id="3.5.4.25"/>
<dbReference type="EMBL" id="U09869">
    <property type="protein sequence ID" value="AAA82170.1"/>
    <property type="molecule type" value="Genomic_DNA"/>
</dbReference>
<dbReference type="PIR" id="I39498">
    <property type="entry name" value="I39498"/>
</dbReference>
<dbReference type="SMR" id="P43525"/>
<dbReference type="UniPathway" id="UPA00275">
    <property type="reaction ID" value="UER00400"/>
</dbReference>
<dbReference type="GO" id="GO:0005829">
    <property type="term" value="C:cytosol"/>
    <property type="evidence" value="ECO:0007669"/>
    <property type="project" value="TreeGrafter"/>
</dbReference>
<dbReference type="GO" id="GO:0008686">
    <property type="term" value="F:3,4-dihydroxy-2-butanone-4-phosphate synthase activity"/>
    <property type="evidence" value="ECO:0007669"/>
    <property type="project" value="TreeGrafter"/>
</dbReference>
<dbReference type="GO" id="GO:0005525">
    <property type="term" value="F:GTP binding"/>
    <property type="evidence" value="ECO:0007669"/>
    <property type="project" value="UniProtKB-KW"/>
</dbReference>
<dbReference type="GO" id="GO:0003935">
    <property type="term" value="F:GTP cyclohydrolase II activity"/>
    <property type="evidence" value="ECO:0007669"/>
    <property type="project" value="UniProtKB-UniRule"/>
</dbReference>
<dbReference type="GO" id="GO:0008270">
    <property type="term" value="F:zinc ion binding"/>
    <property type="evidence" value="ECO:0007669"/>
    <property type="project" value="UniProtKB-UniRule"/>
</dbReference>
<dbReference type="GO" id="GO:0009231">
    <property type="term" value="P:riboflavin biosynthetic process"/>
    <property type="evidence" value="ECO:0007669"/>
    <property type="project" value="UniProtKB-UniRule"/>
</dbReference>
<dbReference type="CDD" id="cd00641">
    <property type="entry name" value="GTP_cyclohydro2"/>
    <property type="match status" value="1"/>
</dbReference>
<dbReference type="FunFam" id="3.40.50.10990:FF:000002">
    <property type="entry name" value="GTP cyclohydrolase-2"/>
    <property type="match status" value="1"/>
</dbReference>
<dbReference type="Gene3D" id="3.40.50.10990">
    <property type="entry name" value="GTP cyclohydrolase II"/>
    <property type="match status" value="1"/>
</dbReference>
<dbReference type="HAMAP" id="MF_00179">
    <property type="entry name" value="RibA"/>
    <property type="match status" value="1"/>
</dbReference>
<dbReference type="InterPro" id="IPR017945">
    <property type="entry name" value="DHBP_synth_RibB-like_a/b_dom"/>
</dbReference>
<dbReference type="InterPro" id="IPR032677">
    <property type="entry name" value="GTP_cyclohydro_II"/>
</dbReference>
<dbReference type="InterPro" id="IPR000926">
    <property type="entry name" value="RibA"/>
</dbReference>
<dbReference type="InterPro" id="IPR036144">
    <property type="entry name" value="RibA-like_sf"/>
</dbReference>
<dbReference type="NCBIfam" id="NF001591">
    <property type="entry name" value="PRK00393.1"/>
    <property type="match status" value="1"/>
</dbReference>
<dbReference type="NCBIfam" id="TIGR00505">
    <property type="entry name" value="ribA"/>
    <property type="match status" value="1"/>
</dbReference>
<dbReference type="PANTHER" id="PTHR21327:SF18">
    <property type="entry name" value="3,4-DIHYDROXY-2-BUTANONE 4-PHOSPHATE SYNTHASE"/>
    <property type="match status" value="1"/>
</dbReference>
<dbReference type="PANTHER" id="PTHR21327">
    <property type="entry name" value="GTP CYCLOHYDROLASE II-RELATED"/>
    <property type="match status" value="1"/>
</dbReference>
<dbReference type="Pfam" id="PF00925">
    <property type="entry name" value="GTP_cyclohydro2"/>
    <property type="match status" value="1"/>
</dbReference>
<dbReference type="SUPFAM" id="SSF142695">
    <property type="entry name" value="RibA-like"/>
    <property type="match status" value="1"/>
</dbReference>
<dbReference type="SUPFAM" id="SSF55821">
    <property type="entry name" value="YrdC/RibB"/>
    <property type="match status" value="1"/>
</dbReference>
<organism>
    <name type="scientific">Azospirillum brasilense</name>
    <dbReference type="NCBI Taxonomy" id="192"/>
    <lineage>
        <taxon>Bacteria</taxon>
        <taxon>Pseudomonadati</taxon>
        <taxon>Pseudomonadota</taxon>
        <taxon>Alphaproteobacteria</taxon>
        <taxon>Rhodospirillales</taxon>
        <taxon>Azospirillaceae</taxon>
        <taxon>Azospirillum</taxon>
    </lineage>
</organism>